<evidence type="ECO:0000250" key="1"/>
<evidence type="ECO:0000256" key="2">
    <source>
        <dbReference type="SAM" id="MobiDB-lite"/>
    </source>
</evidence>
<evidence type="ECO:0000269" key="3">
    <source>
    </source>
</evidence>
<evidence type="ECO:0000269" key="4">
    <source>
    </source>
</evidence>
<evidence type="ECO:0000303" key="5">
    <source>
    </source>
</evidence>
<evidence type="ECO:0000303" key="6">
    <source>
    </source>
</evidence>
<evidence type="ECO:0000303" key="7">
    <source ref="1"/>
</evidence>
<evidence type="ECO:0000305" key="8"/>
<feature type="chain" id="PRO_0000319059" description="Exonuclease mut-7 homolog">
    <location>
        <begin position="1"/>
        <end position="876"/>
    </location>
</feature>
<feature type="domain" description="3'-5' exonuclease">
    <location>
        <begin position="517"/>
        <end position="571"/>
    </location>
</feature>
<feature type="region of interest" description="Disordered" evidence="2">
    <location>
        <begin position="578"/>
        <end position="607"/>
    </location>
</feature>
<feature type="region of interest" description="Disordered" evidence="2">
    <location>
        <begin position="751"/>
        <end position="781"/>
    </location>
</feature>
<feature type="splice variant" id="VSP_031344" description="In isoform 3." evidence="7">
    <location>
        <begin position="1"/>
        <end position="320"/>
    </location>
</feature>
<feature type="splice variant" id="VSP_031345" description="In isoform 2." evidence="5">
    <location>
        <begin position="1"/>
        <end position="277"/>
    </location>
</feature>
<feature type="splice variant" id="VSP_059361" description="In isoform 5.">
    <original>RDPLLLLQALQTLWSTRERKQLREEAWRGFAALDDPL</original>
    <variation>THRLLQPLLHLSRVGCFQSATPQLAGPLEQPRRPLEH</variation>
    <location>
        <begin position="20"/>
        <end position="56"/>
    </location>
</feature>
<feature type="splice variant" id="VSP_059362" description="In isoform 5.">
    <location>
        <begin position="57"/>
        <end position="876"/>
    </location>
</feature>
<feature type="splice variant" id="VSP_031346" description="In isoform 4." evidence="6">
    <original>RRYPEVTSLSLEKLSPKALSRQVLRLQE</original>
    <variation>SCHVTAAGAAASGEERLGLAGAQPSSPE</variation>
    <location>
        <begin position="219"/>
        <end position="246"/>
    </location>
</feature>
<feature type="splice variant" id="VSP_031347" description="In isoform 4." evidence="6">
    <location>
        <begin position="247"/>
        <end position="876"/>
    </location>
</feature>
<feature type="splice variant" id="VSP_031348" description="In isoform 2." evidence="5">
    <original>KSLSQENWTDHV</original>
    <variation>MSPSPSSRPPSS</variation>
    <location>
        <begin position="278"/>
        <end position="289"/>
    </location>
</feature>
<feature type="splice variant" id="VSP_031349" description="In isoform 3." evidence="7">
    <location>
        <begin position="610"/>
        <end position="638"/>
    </location>
</feature>
<feature type="splice variant" id="VSP_031350" description="In isoform 3." evidence="7">
    <location>
        <begin position="760"/>
        <end position="772"/>
    </location>
</feature>
<feature type="sequence variant" id="VAR_062225" description="In dbSNP:rs13291830." evidence="4">
    <original>R</original>
    <variation>Q</variation>
    <location>
        <position position="20"/>
    </location>
</feature>
<feature type="sequence variant" id="VAR_038945" description="In dbSNP:rs7389423." evidence="3">
    <original>R</original>
    <variation>Q</variation>
    <location>
        <position position="220"/>
    </location>
</feature>
<feature type="sequence conflict" description="In Ref. 1; BAC10986 and 3; BAB70838/BAC04356." evidence="8" ref="1 3">
    <original>Q</original>
    <variation>R</variation>
    <location>
        <position position="105"/>
    </location>
</feature>
<feature type="sequence conflict" description="In Ref. 3; BAC04356 and 6; AAH37355/AAI10880." evidence="8" ref="3 6">
    <original>A</original>
    <variation>T</variation>
    <location>
        <position position="160"/>
    </location>
</feature>
<feature type="sequence conflict" description="In Ref. 3; BAC04356." evidence="8" ref="3">
    <original>G</original>
    <variation>S</variation>
    <location>
        <position position="249"/>
    </location>
</feature>
<feature type="sequence conflict" description="In Ref. 1; BAC10986 and 3; BAC04356/BAB70838." evidence="8" ref="1 3">
    <original>E</original>
    <variation>D</variation>
    <location>
        <position position="322"/>
    </location>
</feature>
<feature type="sequence conflict" description="In Ref. 1; BAC10986." evidence="8" ref="1">
    <original>S</original>
    <variation>T</variation>
    <location>
        <position position="519"/>
    </location>
</feature>
<feature type="sequence conflict" description="In Ref. 1; BAC10986 and 3; BAC04356/BAB70838." evidence="8" ref="1 3">
    <original>C</original>
    <variation>Y</variation>
    <location>
        <position position="545"/>
    </location>
</feature>
<name>MUT7_HUMAN</name>
<dbReference type="EC" id="3.1.-.-"/>
<dbReference type="EMBL" id="AB061798">
    <property type="protein sequence ID" value="BAC10986.1"/>
    <property type="molecule type" value="mRNA"/>
</dbReference>
<dbReference type="EMBL" id="HM005438">
    <property type="protein sequence ID" value="AEE61036.1"/>
    <property type="molecule type" value="mRNA"/>
</dbReference>
<dbReference type="EMBL" id="AK000440">
    <property type="protein sequence ID" value="BAA91167.1"/>
    <property type="status" value="ALT_SEQ"/>
    <property type="molecule type" value="mRNA"/>
</dbReference>
<dbReference type="EMBL" id="AK055004">
    <property type="protein sequence ID" value="BAB70838.1"/>
    <property type="molecule type" value="mRNA"/>
</dbReference>
<dbReference type="EMBL" id="AK094438">
    <property type="protein sequence ID" value="BAC04356.1"/>
    <property type="status" value="ALT_SEQ"/>
    <property type="molecule type" value="mRNA"/>
</dbReference>
<dbReference type="EMBL" id="BX322799">
    <property type="status" value="NOT_ANNOTATED_CDS"/>
    <property type="molecule type" value="Genomic_DNA"/>
</dbReference>
<dbReference type="EMBL" id="CH471090">
    <property type="protein sequence ID" value="EAW88381.1"/>
    <property type="status" value="ALT_SEQ"/>
    <property type="molecule type" value="Genomic_DNA"/>
</dbReference>
<dbReference type="EMBL" id="BC037355">
    <property type="protein sequence ID" value="AAH37355.1"/>
    <property type="molecule type" value="mRNA"/>
</dbReference>
<dbReference type="EMBL" id="BC039252">
    <property type="protein sequence ID" value="AAH39252.2"/>
    <property type="status" value="ALT_SEQ"/>
    <property type="molecule type" value="mRNA"/>
</dbReference>
<dbReference type="EMBL" id="BC065002">
    <property type="protein sequence ID" value="AAH65002.1"/>
    <property type="status" value="ALT_SEQ"/>
    <property type="molecule type" value="mRNA"/>
</dbReference>
<dbReference type="EMBL" id="BC110879">
    <property type="protein sequence ID" value="AAI10880.1"/>
    <property type="molecule type" value="mRNA"/>
</dbReference>
<dbReference type="CCDS" id="CCDS48066.1">
    <molecule id="Q8N9H8-1"/>
</dbReference>
<dbReference type="CCDS" id="CCDS75942.1">
    <molecule id="Q8N9H8-4"/>
</dbReference>
<dbReference type="RefSeq" id="NP_001273752.1">
    <molecule id="Q8N9H8-4"/>
    <property type="nucleotide sequence ID" value="NM_001286823.2"/>
</dbReference>
<dbReference type="RefSeq" id="NP_060290.3">
    <molecule id="Q8N9H8-1"/>
    <property type="nucleotide sequence ID" value="NM_017820.4"/>
</dbReference>
<dbReference type="RefSeq" id="XP_047279502.1">
    <molecule id="Q8N9H8-4"/>
    <property type="nucleotide sequence ID" value="XM_047423546.1"/>
</dbReference>
<dbReference type="SMR" id="Q8N9H8"/>
<dbReference type="BioGRID" id="120272">
    <property type="interactions" value="23"/>
</dbReference>
<dbReference type="FunCoup" id="Q8N9H8">
    <property type="interactions" value="43"/>
</dbReference>
<dbReference type="IntAct" id="Q8N9H8">
    <property type="interactions" value="6"/>
</dbReference>
<dbReference type="STRING" id="9606.ENSP00000340474"/>
<dbReference type="GlyGen" id="Q8N9H8">
    <property type="glycosylation" value="1 site, 1 O-linked glycan (1 site)"/>
</dbReference>
<dbReference type="iPTMnet" id="Q8N9H8"/>
<dbReference type="PhosphoSitePlus" id="Q8N9H8"/>
<dbReference type="BioMuta" id="EXD3"/>
<dbReference type="DMDM" id="308153580"/>
<dbReference type="jPOST" id="Q8N9H8"/>
<dbReference type="MassIVE" id="Q8N9H8"/>
<dbReference type="PaxDb" id="9606-ENSP00000340474"/>
<dbReference type="PeptideAtlas" id="Q8N9H8"/>
<dbReference type="ProteomicsDB" id="72536">
    <molecule id="Q8N9H8-2"/>
</dbReference>
<dbReference type="Antibodypedia" id="32432">
    <property type="antibodies" value="71 antibodies from 16 providers"/>
</dbReference>
<dbReference type="DNASU" id="54932"/>
<dbReference type="Ensembl" id="ENST00000340951.9">
    <molecule id="Q8N9H8-1"/>
    <property type="protein sequence ID" value="ENSP00000340474.4"/>
    <property type="gene ID" value="ENSG00000187609.16"/>
</dbReference>
<dbReference type="Ensembl" id="ENST00000465160.2">
    <molecule id="Q8N9H8-5"/>
    <property type="protein sequence ID" value="ENSP00000432895.1"/>
    <property type="gene ID" value="ENSG00000187609.16"/>
</dbReference>
<dbReference type="Ensembl" id="ENST00000479452.5">
    <molecule id="Q8N9H8-4"/>
    <property type="protein sequence ID" value="ENSP00000431859.1"/>
    <property type="gene ID" value="ENSG00000187609.16"/>
</dbReference>
<dbReference type="GeneID" id="54932"/>
<dbReference type="KEGG" id="hsa:54932"/>
<dbReference type="MANE-Select" id="ENST00000340951.9">
    <property type="protein sequence ID" value="ENSP00000340474.4"/>
    <property type="RefSeq nucleotide sequence ID" value="NM_017820.5"/>
    <property type="RefSeq protein sequence ID" value="NP_060290.3"/>
</dbReference>
<dbReference type="UCSC" id="uc004cmp.4">
    <molecule id="Q8N9H8-1"/>
    <property type="organism name" value="human"/>
</dbReference>
<dbReference type="AGR" id="HGNC:26023"/>
<dbReference type="CTD" id="54932"/>
<dbReference type="DisGeNET" id="54932"/>
<dbReference type="GeneCards" id="EXD3"/>
<dbReference type="HGNC" id="HGNC:26023">
    <property type="gene designation" value="EXD3"/>
</dbReference>
<dbReference type="HPA" id="ENSG00000187609">
    <property type="expression patterns" value="Low tissue specificity"/>
</dbReference>
<dbReference type="MIM" id="620859">
    <property type="type" value="gene"/>
</dbReference>
<dbReference type="neXtProt" id="NX_Q8N9H8"/>
<dbReference type="OpenTargets" id="ENSG00000187609"/>
<dbReference type="PharmGKB" id="PA164719422"/>
<dbReference type="VEuPathDB" id="HostDB:ENSG00000187609"/>
<dbReference type="eggNOG" id="KOG2207">
    <property type="taxonomic scope" value="Eukaryota"/>
</dbReference>
<dbReference type="GeneTree" id="ENSGT00390000006843"/>
<dbReference type="HOGENOM" id="CLU_007046_0_0_1"/>
<dbReference type="InParanoid" id="Q8N9H8"/>
<dbReference type="OMA" id="CSNWANR"/>
<dbReference type="PAN-GO" id="Q8N9H8">
    <property type="GO annotations" value="1 GO annotation based on evolutionary models"/>
</dbReference>
<dbReference type="PhylomeDB" id="Q8N9H8"/>
<dbReference type="TreeFam" id="TF328546"/>
<dbReference type="PathwayCommons" id="Q8N9H8"/>
<dbReference type="SignaLink" id="Q8N9H8"/>
<dbReference type="BioGRID-ORCS" id="54932">
    <property type="hits" value="28 hits in 1154 CRISPR screens"/>
</dbReference>
<dbReference type="ChiTaRS" id="EXD3">
    <property type="organism name" value="human"/>
</dbReference>
<dbReference type="GenomeRNAi" id="54932"/>
<dbReference type="Pharos" id="Q8N9H8">
    <property type="development level" value="Tbio"/>
</dbReference>
<dbReference type="PRO" id="PR:Q8N9H8"/>
<dbReference type="Proteomes" id="UP000005640">
    <property type="component" value="Chromosome 9"/>
</dbReference>
<dbReference type="RNAct" id="Q8N9H8">
    <property type="molecule type" value="protein"/>
</dbReference>
<dbReference type="Bgee" id="ENSG00000187609">
    <property type="expression patterns" value="Expressed in right uterine tube and 124 other cell types or tissues"/>
</dbReference>
<dbReference type="ExpressionAtlas" id="Q8N9H8">
    <property type="expression patterns" value="baseline and differential"/>
</dbReference>
<dbReference type="GO" id="GO:0008408">
    <property type="term" value="F:3'-5' exonuclease activity"/>
    <property type="evidence" value="ECO:0007669"/>
    <property type="project" value="InterPro"/>
</dbReference>
<dbReference type="GO" id="GO:0046872">
    <property type="term" value="F:metal ion binding"/>
    <property type="evidence" value="ECO:0007669"/>
    <property type="project" value="UniProtKB-KW"/>
</dbReference>
<dbReference type="GO" id="GO:0003676">
    <property type="term" value="F:nucleic acid binding"/>
    <property type="evidence" value="ECO:0007669"/>
    <property type="project" value="InterPro"/>
</dbReference>
<dbReference type="GO" id="GO:0006139">
    <property type="term" value="P:nucleobase-containing compound metabolic process"/>
    <property type="evidence" value="ECO:0007669"/>
    <property type="project" value="InterPro"/>
</dbReference>
<dbReference type="CDD" id="cd06146">
    <property type="entry name" value="mut-7_like_exo"/>
    <property type="match status" value="1"/>
</dbReference>
<dbReference type="FunFam" id="3.30.420.10:FF:000074">
    <property type="entry name" value="exonuclease mut-7 homolog isoform X2"/>
    <property type="match status" value="1"/>
</dbReference>
<dbReference type="Gene3D" id="3.30.420.10">
    <property type="entry name" value="Ribonuclease H-like superfamily/Ribonuclease H"/>
    <property type="match status" value="1"/>
</dbReference>
<dbReference type="InterPro" id="IPR002562">
    <property type="entry name" value="3'-5'_exonuclease_dom"/>
</dbReference>
<dbReference type="InterPro" id="IPR052408">
    <property type="entry name" value="Exonuclease_MUT-7-like"/>
</dbReference>
<dbReference type="InterPro" id="IPR037432">
    <property type="entry name" value="Mut-7_DEDDy_dom"/>
</dbReference>
<dbReference type="InterPro" id="IPR002782">
    <property type="entry name" value="Mut7-C_RNAse_dom"/>
</dbReference>
<dbReference type="InterPro" id="IPR012337">
    <property type="entry name" value="RNaseH-like_sf"/>
</dbReference>
<dbReference type="InterPro" id="IPR036397">
    <property type="entry name" value="RNaseH_sf"/>
</dbReference>
<dbReference type="PANTHER" id="PTHR47765">
    <property type="entry name" value="3'-5' EXONUCLEASE DOMAIN-CONTAINING PROTEIN"/>
    <property type="match status" value="1"/>
</dbReference>
<dbReference type="PANTHER" id="PTHR47765:SF2">
    <property type="entry name" value="EXONUCLEASE MUT-7 HOMOLOG"/>
    <property type="match status" value="1"/>
</dbReference>
<dbReference type="Pfam" id="PF01612">
    <property type="entry name" value="DNA_pol_A_exo1"/>
    <property type="match status" value="1"/>
</dbReference>
<dbReference type="Pfam" id="PF01927">
    <property type="entry name" value="Mut7-C"/>
    <property type="match status" value="1"/>
</dbReference>
<dbReference type="SMART" id="SM00474">
    <property type="entry name" value="35EXOc"/>
    <property type="match status" value="1"/>
</dbReference>
<dbReference type="SUPFAM" id="SSF53098">
    <property type="entry name" value="Ribonuclease H-like"/>
    <property type="match status" value="1"/>
</dbReference>
<gene>
    <name type="primary">EXD3</name>
    <name type="ORF">HBE269</name>
</gene>
<keyword id="KW-0025">Alternative splicing</keyword>
<keyword id="KW-0269">Exonuclease</keyword>
<keyword id="KW-0378">Hydrolase</keyword>
<keyword id="KW-0460">Magnesium</keyword>
<keyword id="KW-0479">Metal-binding</keyword>
<keyword id="KW-0540">Nuclease</keyword>
<keyword id="KW-1267">Proteomics identification</keyword>
<keyword id="KW-1185">Reference proteome</keyword>
<reference key="1">
    <citation type="submission" date="2001-05" db="EMBL/GenBank/DDBJ databases">
        <title>A novel gene from human brain endothelial cell.</title>
        <authorList>
            <person name="Hasegawa H."/>
            <person name="Yonezawa T."/>
            <person name="Ninomiya Y."/>
        </authorList>
    </citation>
    <scope>NUCLEOTIDE SEQUENCE [MRNA] (ISOFORM 3)</scope>
</reference>
<reference key="2">
    <citation type="submission" date="2010-03" db="EMBL/GenBank/DDBJ databases">
        <title>Human testis protein.</title>
        <authorList>
            <person name="Li J.Y."/>
        </authorList>
    </citation>
    <scope>NUCLEOTIDE SEQUENCE [MRNA] (ISOFORM 1)</scope>
</reference>
<reference key="3">
    <citation type="journal article" date="2004" name="Nat. Genet.">
        <title>Complete sequencing and characterization of 21,243 full-length human cDNAs.</title>
        <authorList>
            <person name="Ota T."/>
            <person name="Suzuki Y."/>
            <person name="Nishikawa T."/>
            <person name="Otsuki T."/>
            <person name="Sugiyama T."/>
            <person name="Irie R."/>
            <person name="Wakamatsu A."/>
            <person name="Hayashi K."/>
            <person name="Sato H."/>
            <person name="Nagai K."/>
            <person name="Kimura K."/>
            <person name="Makita H."/>
            <person name="Sekine M."/>
            <person name="Obayashi M."/>
            <person name="Nishi T."/>
            <person name="Shibahara T."/>
            <person name="Tanaka T."/>
            <person name="Ishii S."/>
            <person name="Yamamoto J."/>
            <person name="Saito K."/>
            <person name="Kawai Y."/>
            <person name="Isono Y."/>
            <person name="Nakamura Y."/>
            <person name="Nagahari K."/>
            <person name="Murakami K."/>
            <person name="Yasuda T."/>
            <person name="Iwayanagi T."/>
            <person name="Wagatsuma M."/>
            <person name="Shiratori A."/>
            <person name="Sudo H."/>
            <person name="Hosoiri T."/>
            <person name="Kaku Y."/>
            <person name="Kodaira H."/>
            <person name="Kondo H."/>
            <person name="Sugawara M."/>
            <person name="Takahashi M."/>
            <person name="Kanda K."/>
            <person name="Yokoi T."/>
            <person name="Furuya T."/>
            <person name="Kikkawa E."/>
            <person name="Omura Y."/>
            <person name="Abe K."/>
            <person name="Kamihara K."/>
            <person name="Katsuta N."/>
            <person name="Sato K."/>
            <person name="Tanikawa M."/>
            <person name="Yamazaki M."/>
            <person name="Ninomiya K."/>
            <person name="Ishibashi T."/>
            <person name="Yamashita H."/>
            <person name="Murakawa K."/>
            <person name="Fujimori K."/>
            <person name="Tanai H."/>
            <person name="Kimata M."/>
            <person name="Watanabe M."/>
            <person name="Hiraoka S."/>
            <person name="Chiba Y."/>
            <person name="Ishida S."/>
            <person name="Ono Y."/>
            <person name="Takiguchi S."/>
            <person name="Watanabe S."/>
            <person name="Yosida M."/>
            <person name="Hotuta T."/>
            <person name="Kusano J."/>
            <person name="Kanehori K."/>
            <person name="Takahashi-Fujii A."/>
            <person name="Hara H."/>
            <person name="Tanase T.-O."/>
            <person name="Nomura Y."/>
            <person name="Togiya S."/>
            <person name="Komai F."/>
            <person name="Hara R."/>
            <person name="Takeuchi K."/>
            <person name="Arita M."/>
            <person name="Imose N."/>
            <person name="Musashino K."/>
            <person name="Yuuki H."/>
            <person name="Oshima A."/>
            <person name="Sasaki N."/>
            <person name="Aotsuka S."/>
            <person name="Yoshikawa Y."/>
            <person name="Matsunawa H."/>
            <person name="Ichihara T."/>
            <person name="Shiohata N."/>
            <person name="Sano S."/>
            <person name="Moriya S."/>
            <person name="Momiyama H."/>
            <person name="Satoh N."/>
            <person name="Takami S."/>
            <person name="Terashima Y."/>
            <person name="Suzuki O."/>
            <person name="Nakagawa S."/>
            <person name="Senoh A."/>
            <person name="Mizoguchi H."/>
            <person name="Goto Y."/>
            <person name="Shimizu F."/>
            <person name="Wakebe H."/>
            <person name="Hishigaki H."/>
            <person name="Watanabe T."/>
            <person name="Sugiyama A."/>
            <person name="Takemoto M."/>
            <person name="Kawakami B."/>
            <person name="Yamazaki M."/>
            <person name="Watanabe K."/>
            <person name="Kumagai A."/>
            <person name="Itakura S."/>
            <person name="Fukuzumi Y."/>
            <person name="Fujimori Y."/>
            <person name="Komiyama M."/>
            <person name="Tashiro H."/>
            <person name="Tanigami A."/>
            <person name="Fujiwara T."/>
            <person name="Ono T."/>
            <person name="Yamada K."/>
            <person name="Fujii Y."/>
            <person name="Ozaki K."/>
            <person name="Hirao M."/>
            <person name="Ohmori Y."/>
            <person name="Kawabata A."/>
            <person name="Hikiji T."/>
            <person name="Kobatake N."/>
            <person name="Inagaki H."/>
            <person name="Ikema Y."/>
            <person name="Okamoto S."/>
            <person name="Okitani R."/>
            <person name="Kawakami T."/>
            <person name="Noguchi S."/>
            <person name="Itoh T."/>
            <person name="Shigeta K."/>
            <person name="Senba T."/>
            <person name="Matsumura K."/>
            <person name="Nakajima Y."/>
            <person name="Mizuno T."/>
            <person name="Morinaga M."/>
            <person name="Sasaki M."/>
            <person name="Togashi T."/>
            <person name="Oyama M."/>
            <person name="Hata H."/>
            <person name="Watanabe M."/>
            <person name="Komatsu T."/>
            <person name="Mizushima-Sugano J."/>
            <person name="Satoh T."/>
            <person name="Shirai Y."/>
            <person name="Takahashi Y."/>
            <person name="Nakagawa K."/>
            <person name="Okumura K."/>
            <person name="Nagase T."/>
            <person name="Nomura N."/>
            <person name="Kikuchi H."/>
            <person name="Masuho Y."/>
            <person name="Yamashita R."/>
            <person name="Nakai K."/>
            <person name="Yada T."/>
            <person name="Nakamura Y."/>
            <person name="Ohara O."/>
            <person name="Isogai T."/>
            <person name="Sugano S."/>
        </authorList>
    </citation>
    <scope>NUCLEOTIDE SEQUENCE [LARGE SCALE MRNA] (ISOFORMS 1; 2 AND 5)</scope>
    <scope>VARIANT GLN-220</scope>
    <source>
        <tissue>Cerebellum</tissue>
    </source>
</reference>
<reference key="4">
    <citation type="journal article" date="2004" name="Nature">
        <title>DNA sequence and analysis of human chromosome 9.</title>
        <authorList>
            <person name="Humphray S.J."/>
            <person name="Oliver K."/>
            <person name="Hunt A.R."/>
            <person name="Plumb R.W."/>
            <person name="Loveland J.E."/>
            <person name="Howe K.L."/>
            <person name="Andrews T.D."/>
            <person name="Searle S."/>
            <person name="Hunt S.E."/>
            <person name="Scott C.E."/>
            <person name="Jones M.C."/>
            <person name="Ainscough R."/>
            <person name="Almeida J.P."/>
            <person name="Ambrose K.D."/>
            <person name="Ashwell R.I.S."/>
            <person name="Babbage A.K."/>
            <person name="Babbage S."/>
            <person name="Bagguley C.L."/>
            <person name="Bailey J."/>
            <person name="Banerjee R."/>
            <person name="Barker D.J."/>
            <person name="Barlow K.F."/>
            <person name="Bates K."/>
            <person name="Beasley H."/>
            <person name="Beasley O."/>
            <person name="Bird C.P."/>
            <person name="Bray-Allen S."/>
            <person name="Brown A.J."/>
            <person name="Brown J.Y."/>
            <person name="Burford D."/>
            <person name="Burrill W."/>
            <person name="Burton J."/>
            <person name="Carder C."/>
            <person name="Carter N.P."/>
            <person name="Chapman J.C."/>
            <person name="Chen Y."/>
            <person name="Clarke G."/>
            <person name="Clark S.Y."/>
            <person name="Clee C.M."/>
            <person name="Clegg S."/>
            <person name="Collier R.E."/>
            <person name="Corby N."/>
            <person name="Crosier M."/>
            <person name="Cummings A.T."/>
            <person name="Davies J."/>
            <person name="Dhami P."/>
            <person name="Dunn M."/>
            <person name="Dutta I."/>
            <person name="Dyer L.W."/>
            <person name="Earthrowl M.E."/>
            <person name="Faulkner L."/>
            <person name="Fleming C.J."/>
            <person name="Frankish A."/>
            <person name="Frankland J.A."/>
            <person name="French L."/>
            <person name="Fricker D.G."/>
            <person name="Garner P."/>
            <person name="Garnett J."/>
            <person name="Ghori J."/>
            <person name="Gilbert J.G.R."/>
            <person name="Glison C."/>
            <person name="Grafham D.V."/>
            <person name="Gribble S."/>
            <person name="Griffiths C."/>
            <person name="Griffiths-Jones S."/>
            <person name="Grocock R."/>
            <person name="Guy J."/>
            <person name="Hall R.E."/>
            <person name="Hammond S."/>
            <person name="Harley J.L."/>
            <person name="Harrison E.S.I."/>
            <person name="Hart E.A."/>
            <person name="Heath P.D."/>
            <person name="Henderson C.D."/>
            <person name="Hopkins B.L."/>
            <person name="Howard P.J."/>
            <person name="Howden P.J."/>
            <person name="Huckle E."/>
            <person name="Johnson C."/>
            <person name="Johnson D."/>
            <person name="Joy A.A."/>
            <person name="Kay M."/>
            <person name="Keenan S."/>
            <person name="Kershaw J.K."/>
            <person name="Kimberley A.M."/>
            <person name="King A."/>
            <person name="Knights A."/>
            <person name="Laird G.K."/>
            <person name="Langford C."/>
            <person name="Lawlor S."/>
            <person name="Leongamornlert D.A."/>
            <person name="Leversha M."/>
            <person name="Lloyd C."/>
            <person name="Lloyd D.M."/>
            <person name="Lovell J."/>
            <person name="Martin S."/>
            <person name="Mashreghi-Mohammadi M."/>
            <person name="Matthews L."/>
            <person name="McLaren S."/>
            <person name="McLay K.E."/>
            <person name="McMurray A."/>
            <person name="Milne S."/>
            <person name="Nickerson T."/>
            <person name="Nisbett J."/>
            <person name="Nordsiek G."/>
            <person name="Pearce A.V."/>
            <person name="Peck A.I."/>
            <person name="Porter K.M."/>
            <person name="Pandian R."/>
            <person name="Pelan S."/>
            <person name="Phillimore B."/>
            <person name="Povey S."/>
            <person name="Ramsey Y."/>
            <person name="Rand V."/>
            <person name="Scharfe M."/>
            <person name="Sehra H.K."/>
            <person name="Shownkeen R."/>
            <person name="Sims S.K."/>
            <person name="Skuce C.D."/>
            <person name="Smith M."/>
            <person name="Steward C.A."/>
            <person name="Swarbreck D."/>
            <person name="Sycamore N."/>
            <person name="Tester J."/>
            <person name="Thorpe A."/>
            <person name="Tracey A."/>
            <person name="Tromans A."/>
            <person name="Thomas D.W."/>
            <person name="Wall M."/>
            <person name="Wallis J.M."/>
            <person name="West A.P."/>
            <person name="Whitehead S.L."/>
            <person name="Willey D.L."/>
            <person name="Williams S.A."/>
            <person name="Wilming L."/>
            <person name="Wray P.W."/>
            <person name="Young L."/>
            <person name="Ashurst J.L."/>
            <person name="Coulson A."/>
            <person name="Blocker H."/>
            <person name="Durbin R.M."/>
            <person name="Sulston J.E."/>
            <person name="Hubbard T."/>
            <person name="Jackson M.J."/>
            <person name="Bentley D.R."/>
            <person name="Beck S."/>
            <person name="Rogers J."/>
            <person name="Dunham I."/>
        </authorList>
    </citation>
    <scope>NUCLEOTIDE SEQUENCE [LARGE SCALE GENOMIC DNA]</scope>
</reference>
<reference key="5">
    <citation type="submission" date="2005-07" db="EMBL/GenBank/DDBJ databases">
        <authorList>
            <person name="Mural R.J."/>
            <person name="Istrail S."/>
            <person name="Sutton G.G."/>
            <person name="Florea L."/>
            <person name="Halpern A.L."/>
            <person name="Mobarry C.M."/>
            <person name="Lippert R."/>
            <person name="Walenz B."/>
            <person name="Shatkay H."/>
            <person name="Dew I."/>
            <person name="Miller J.R."/>
            <person name="Flanigan M.J."/>
            <person name="Edwards N.J."/>
            <person name="Bolanos R."/>
            <person name="Fasulo D."/>
            <person name="Halldorsson B.V."/>
            <person name="Hannenhalli S."/>
            <person name="Turner R."/>
            <person name="Yooseph S."/>
            <person name="Lu F."/>
            <person name="Nusskern D.R."/>
            <person name="Shue B.C."/>
            <person name="Zheng X.H."/>
            <person name="Zhong F."/>
            <person name="Delcher A.L."/>
            <person name="Huson D.H."/>
            <person name="Kravitz S.A."/>
            <person name="Mouchard L."/>
            <person name="Reinert K."/>
            <person name="Remington K.A."/>
            <person name="Clark A.G."/>
            <person name="Waterman M.S."/>
            <person name="Eichler E.E."/>
            <person name="Adams M.D."/>
            <person name="Hunkapiller M.W."/>
            <person name="Myers E.W."/>
            <person name="Venter J.C."/>
        </authorList>
    </citation>
    <scope>NUCLEOTIDE SEQUENCE [LARGE SCALE GENOMIC DNA]</scope>
</reference>
<reference key="6">
    <citation type="journal article" date="2004" name="Genome Res.">
        <title>The status, quality, and expansion of the NIH full-length cDNA project: the Mammalian Gene Collection (MGC).</title>
        <authorList>
            <consortium name="The MGC Project Team"/>
        </authorList>
    </citation>
    <scope>NUCLEOTIDE SEQUENCE [LARGE SCALE MRNA] (ISOFORMS 4 AND 5)</scope>
    <scope>VARIANT GLN-20</scope>
    <source>
        <tissue>Lung</tissue>
        <tissue>Skin</tissue>
    </source>
</reference>
<comment type="function">
    <text evidence="1">Possesses 3'-5' exoribonuclease activity. Required for 3'-end trimming of AGO1-bound miRNAs (By similarity).</text>
</comment>
<comment type="cofactor">
    <cofactor evidence="1">
        <name>Mg(2+)</name>
        <dbReference type="ChEBI" id="CHEBI:18420"/>
    </cofactor>
</comment>
<comment type="interaction">
    <interactant intactId="EBI-750745">
        <id>Q8N9H8</id>
    </interactant>
    <interactant intactId="EBI-724310">
        <id>Q15038</id>
        <label>DAZAP2</label>
    </interactant>
    <organismsDiffer>false</organismsDiffer>
    <experiments>3</experiments>
</comment>
<comment type="alternative products">
    <event type="alternative splicing"/>
    <isoform>
        <id>Q8N9H8-1</id>
        <name>1</name>
        <sequence type="displayed"/>
    </isoform>
    <isoform>
        <id>Q8N9H8-2</id>
        <name>2</name>
        <sequence type="described" ref="VSP_031345 VSP_031348"/>
    </isoform>
    <isoform>
        <id>Q8N9H8-3</id>
        <name>3</name>
        <sequence type="described" ref="VSP_031344 VSP_031349 VSP_031350"/>
    </isoform>
    <isoform>
        <id>Q8N9H8-4</id>
        <name>4</name>
        <sequence type="described" ref="VSP_031346 VSP_031347"/>
    </isoform>
    <isoform>
        <id>Q8N9H8-5</id>
        <name>5</name>
        <sequence type="described" ref="VSP_059361 VSP_059362"/>
    </isoform>
</comment>
<comment type="similarity">
    <text evidence="8">Belongs to the mut-7 family.</text>
</comment>
<comment type="sequence caution" evidence="8">
    <conflict type="erroneous translation">
        <sequence resource="EMBL-CDS" id="AAH39252"/>
    </conflict>
    <text>Wrong choice of CDS.</text>
</comment>
<comment type="sequence caution" evidence="8">
    <conflict type="erroneous translation">
        <sequence resource="EMBL-CDS" id="AAH65002"/>
    </conflict>
    <text>Wrong choice of CDS.</text>
</comment>
<comment type="sequence caution" evidence="8">
    <conflict type="erroneous translation">
        <sequence resource="EMBL-CDS" id="BAA91167"/>
    </conflict>
    <text>Wrong choice of CDS.</text>
</comment>
<comment type="sequence caution" evidence="8">
    <conflict type="erroneous termination">
        <sequence resource="EMBL-CDS" id="BAC04356"/>
    </conflict>
    <text>Truncated C-terminus.</text>
</comment>
<comment type="sequence caution" evidence="8">
    <conflict type="erroneous gene model prediction">
        <sequence resource="EMBL-CDS" id="EAW88381"/>
    </conflict>
</comment>
<accession>Q8N9H8</accession>
<accession>A0A140VJP9</accession>
<accession>B8A4U7</accession>
<accession>C9JIQ9</accession>
<accession>E9PN82</accession>
<accession>Q2TAK4</accession>
<accession>Q6P1M1</accession>
<accession>Q8IXT8</accession>
<accession>Q8N3X4</accession>
<accession>Q8NHD1</accession>
<accession>Q96NP1</accession>
<accession>Q9NX53</accession>
<protein>
    <recommendedName>
        <fullName>Exonuclease mut-7 homolog</fullName>
        <ecNumber>3.1.-.-</ecNumber>
    </recommendedName>
    <alternativeName>
        <fullName>Exonuclease 3'-5' domain-containing protein 3</fullName>
    </alternativeName>
</protein>
<sequence length="876" mass="96598">MDPGDPAGDPAAGERHRMGRDPLLLLQALQTLWSTRERKQLREEAWRGFAALDDPLAGLLDMLESCRGQRGEGPSLAAWISHQLQCWLQAQPCPSLAQHSLRLKQLQARAVKVLTESPPSLAAPLASIFQLQDADRSCLLAHVHRLHHEGRFREAATLGATLKLQSELGVEKMSIPLLLQDKVALVERYVAGFPDLQRRLLVLMDSWCQPGFDIKDVARRYPEVTSLSLEKLSPKALSRQVLRLQERYGVAPALCPNAAIQQRLAALRHLCHKRFVEKSLSQENWTDHVQGLVGQSPWLQEQLSQLLVSHSDPVTAAQCAMELLLPEERLPAAVAVELRRFRLQGRATEADSRLEVKDMKDRYYQLPIPRENVHLLASWEDLTRHEGALLQCHQVVGVDVEWTPVFVAGGRPRPSLLQVAVEGHVFLLDVLALSQPPTGQGAQAFSRLVAQLLSDPSITKLGYGMVGDLQKLGTSCPALAHVEKQILGGMDLLLVHRQMRVASVPAPAVDRARELRGLSLLVQQVLGTALDKTQQLSNWDRRPLCEEQVIYAAADAYCLLEVHQALCREPARFHLSEDLAGSRRPRHRERPGARKPPGLQKASAPAAPRQVPVAVAVSEGAAPQIPARAFRVVCDNMLQGLARSLRCLGVDARMLGNGEDHRRAAEVARQEGRIILTSGQPFHKLRAQVGAGRCLSVDCSLKAQQQAKAVLKHFNVRVTHADIFSRCQACNCDQYLKVSRDMMKQLMWLSSHQEGPRSSGDEATQSQAVQEPGPAPDAAPEGCTYDRPCRWLQMADLRAETPDMLADGTRLQLAGVPVGVLRTPGLRCFYCCTGCGKVFWDGSHLGRVATHFRDMLESAPSPCEPSPAPSPASSPF</sequence>
<organism>
    <name type="scientific">Homo sapiens</name>
    <name type="common">Human</name>
    <dbReference type="NCBI Taxonomy" id="9606"/>
    <lineage>
        <taxon>Eukaryota</taxon>
        <taxon>Metazoa</taxon>
        <taxon>Chordata</taxon>
        <taxon>Craniata</taxon>
        <taxon>Vertebrata</taxon>
        <taxon>Euteleostomi</taxon>
        <taxon>Mammalia</taxon>
        <taxon>Eutheria</taxon>
        <taxon>Euarchontoglires</taxon>
        <taxon>Primates</taxon>
        <taxon>Haplorrhini</taxon>
        <taxon>Catarrhini</taxon>
        <taxon>Hominidae</taxon>
        <taxon>Homo</taxon>
    </lineage>
</organism>
<proteinExistence type="evidence at protein level"/>